<feature type="chain" id="PRO_0000331159" description="Spermidine export protein MdtI">
    <location>
        <begin position="1"/>
        <end position="109"/>
    </location>
</feature>
<feature type="transmembrane region" description="Helical" evidence="1">
    <location>
        <begin position="6"/>
        <end position="26"/>
    </location>
</feature>
<feature type="transmembrane region" description="Helical" evidence="1">
    <location>
        <begin position="36"/>
        <end position="56"/>
    </location>
</feature>
<feature type="transmembrane region" description="Helical" evidence="1">
    <location>
        <begin position="64"/>
        <end position="84"/>
    </location>
</feature>
<feature type="transmembrane region" description="Helical" evidence="1">
    <location>
        <begin position="88"/>
        <end position="108"/>
    </location>
</feature>
<reference key="1">
    <citation type="journal article" date="2006" name="J. Bacteriol.">
        <title>Complete genome sequence of Yersinia pestis strains Antiqua and Nepal516: evidence of gene reduction in an emerging pathogen.</title>
        <authorList>
            <person name="Chain P.S.G."/>
            <person name="Hu P."/>
            <person name="Malfatti S.A."/>
            <person name="Radnedge L."/>
            <person name="Larimer F."/>
            <person name="Vergez L.M."/>
            <person name="Worsham P."/>
            <person name="Chu M.C."/>
            <person name="Andersen G.L."/>
        </authorList>
    </citation>
    <scope>NUCLEOTIDE SEQUENCE [LARGE SCALE GENOMIC DNA]</scope>
    <source>
        <strain>Nepal516</strain>
    </source>
</reference>
<reference key="2">
    <citation type="submission" date="2009-04" db="EMBL/GenBank/DDBJ databases">
        <title>Yersinia pestis Nepal516A whole genome shotgun sequencing project.</title>
        <authorList>
            <person name="Plunkett G. III"/>
            <person name="Anderson B.D."/>
            <person name="Baumler D.J."/>
            <person name="Burland V."/>
            <person name="Cabot E.L."/>
            <person name="Glasner J.D."/>
            <person name="Mau B."/>
            <person name="Neeno-Eckwall E."/>
            <person name="Perna N.T."/>
            <person name="Munk A.C."/>
            <person name="Tapia R."/>
            <person name="Green L.D."/>
            <person name="Rogers Y.C."/>
            <person name="Detter J.C."/>
            <person name="Bruce D.C."/>
            <person name="Brettin T.S."/>
        </authorList>
    </citation>
    <scope>NUCLEOTIDE SEQUENCE [LARGE SCALE GENOMIC DNA]</scope>
    <source>
        <strain>Nepal516</strain>
    </source>
</reference>
<protein>
    <recommendedName>
        <fullName evidence="1">Spermidine export protein MdtI</fullName>
    </recommendedName>
</protein>
<keyword id="KW-0997">Cell inner membrane</keyword>
<keyword id="KW-1003">Cell membrane</keyword>
<keyword id="KW-0472">Membrane</keyword>
<keyword id="KW-0812">Transmembrane</keyword>
<keyword id="KW-1133">Transmembrane helix</keyword>
<keyword id="KW-0813">Transport</keyword>
<sequence>MQQLEFYPIAFLILAVMLEIVANILLKMSDGFRRKWLGILSLLSVLGAFSALAQAVKGIELSVAYALWGGFGIAATVAAGWILFNQRLNYKGWIGLILLLAGMVMIKLS</sequence>
<name>MDTI_YERPN</name>
<proteinExistence type="inferred from homology"/>
<organism>
    <name type="scientific">Yersinia pestis bv. Antiqua (strain Nepal516)</name>
    <dbReference type="NCBI Taxonomy" id="377628"/>
    <lineage>
        <taxon>Bacteria</taxon>
        <taxon>Pseudomonadati</taxon>
        <taxon>Pseudomonadota</taxon>
        <taxon>Gammaproteobacteria</taxon>
        <taxon>Enterobacterales</taxon>
        <taxon>Yersiniaceae</taxon>
        <taxon>Yersinia</taxon>
    </lineage>
</organism>
<accession>Q1CJF4</accession>
<accession>C4GSH5</accession>
<evidence type="ECO:0000255" key="1">
    <source>
        <dbReference type="HAMAP-Rule" id="MF_01597"/>
    </source>
</evidence>
<comment type="function">
    <text evidence="1">Catalyzes the excretion of spermidine.</text>
</comment>
<comment type="subunit">
    <text evidence="1">Forms a complex with MdtJ.</text>
</comment>
<comment type="subcellular location">
    <subcellularLocation>
        <location evidence="1">Cell inner membrane</location>
        <topology evidence="1">Multi-pass membrane protein</topology>
    </subcellularLocation>
</comment>
<comment type="similarity">
    <text evidence="1">Belongs to the drug/metabolite transporter (DMT) superfamily. Small multidrug resistance (SMR) (TC 2.A.7.1) family. MdtI subfamily.</text>
</comment>
<dbReference type="EMBL" id="CP000305">
    <property type="protein sequence ID" value="ABG17876.1"/>
    <property type="molecule type" value="Genomic_DNA"/>
</dbReference>
<dbReference type="EMBL" id="ACNQ01000009">
    <property type="protein sequence ID" value="EEO76985.1"/>
    <property type="molecule type" value="Genomic_DNA"/>
</dbReference>
<dbReference type="RefSeq" id="WP_002211187.1">
    <property type="nucleotide sequence ID" value="NZ_ACNQ01000009.1"/>
</dbReference>
<dbReference type="SMR" id="Q1CJF4"/>
<dbReference type="GeneID" id="57976592"/>
<dbReference type="KEGG" id="ypn:YPN_1546"/>
<dbReference type="HOGENOM" id="CLU_133067_0_4_6"/>
<dbReference type="Proteomes" id="UP000008936">
    <property type="component" value="Chromosome"/>
</dbReference>
<dbReference type="GO" id="GO:0005886">
    <property type="term" value="C:plasma membrane"/>
    <property type="evidence" value="ECO:0007669"/>
    <property type="project" value="UniProtKB-SubCell"/>
</dbReference>
<dbReference type="GO" id="GO:0015199">
    <property type="term" value="F:amino-acid betaine transmembrane transporter activity"/>
    <property type="evidence" value="ECO:0007669"/>
    <property type="project" value="TreeGrafter"/>
</dbReference>
<dbReference type="GO" id="GO:0015297">
    <property type="term" value="F:antiporter activity"/>
    <property type="evidence" value="ECO:0007669"/>
    <property type="project" value="TreeGrafter"/>
</dbReference>
<dbReference type="GO" id="GO:0015220">
    <property type="term" value="F:choline transmembrane transporter activity"/>
    <property type="evidence" value="ECO:0007669"/>
    <property type="project" value="TreeGrafter"/>
</dbReference>
<dbReference type="GO" id="GO:0015606">
    <property type="term" value="F:spermidine transmembrane transporter activity"/>
    <property type="evidence" value="ECO:0007669"/>
    <property type="project" value="UniProtKB-UniRule"/>
</dbReference>
<dbReference type="GO" id="GO:0031460">
    <property type="term" value="P:glycine betaine transport"/>
    <property type="evidence" value="ECO:0007669"/>
    <property type="project" value="TreeGrafter"/>
</dbReference>
<dbReference type="FunFam" id="1.10.3730.20:FF:000001">
    <property type="entry name" value="Quaternary ammonium compound resistance transporter SugE"/>
    <property type="match status" value="1"/>
</dbReference>
<dbReference type="Gene3D" id="1.10.3730.20">
    <property type="match status" value="1"/>
</dbReference>
<dbReference type="HAMAP" id="MF_01597">
    <property type="entry name" value="MdtI"/>
    <property type="match status" value="1"/>
</dbReference>
<dbReference type="InterPro" id="IPR000390">
    <property type="entry name" value="Small_drug/metabolite_transptr"/>
</dbReference>
<dbReference type="InterPro" id="IPR045324">
    <property type="entry name" value="Small_multidrug_res"/>
</dbReference>
<dbReference type="InterPro" id="IPR023737">
    <property type="entry name" value="Spermidine_export_MdtI"/>
</dbReference>
<dbReference type="NCBIfam" id="NF007934">
    <property type="entry name" value="PRK10650.1"/>
    <property type="match status" value="1"/>
</dbReference>
<dbReference type="PANTHER" id="PTHR30561">
    <property type="entry name" value="SMR FAMILY PROTON-DEPENDENT DRUG EFFLUX TRANSPORTER SUGE"/>
    <property type="match status" value="1"/>
</dbReference>
<dbReference type="PANTHER" id="PTHR30561:SF6">
    <property type="entry name" value="SPERMIDINE EXPORT PROTEIN MDTI"/>
    <property type="match status" value="1"/>
</dbReference>
<dbReference type="Pfam" id="PF00893">
    <property type="entry name" value="Multi_Drug_Res"/>
    <property type="match status" value="1"/>
</dbReference>
<dbReference type="SUPFAM" id="SSF103481">
    <property type="entry name" value="Multidrug resistance efflux transporter EmrE"/>
    <property type="match status" value="1"/>
</dbReference>
<gene>
    <name evidence="1" type="primary">mdtI</name>
    <name type="ordered locus">YPN_1546</name>
    <name type="ORF">YP516_1717</name>
</gene>